<name>PPTC7_XENLA</name>
<protein>
    <recommendedName>
        <fullName>Protein phosphatase PTC7 homolog</fullName>
        <ecNumber evidence="2">3.1.3.16</ecNumber>
    </recommendedName>
</protein>
<sequence length="297" mass="32427">MFSVLSCGRLVARAVFGGLSQTDSRDYSLVTASCGFGKDARKGILKKGMCYGDDACFIARHRTADVLGVADGVGGWRDYGVDPSQFSETLMRTCERLVKEGRFVPTNPVGILTSSYRELLQNKVPLLGSSTACLVVLDRTSHRLHTANLGDSGFLVVRAGEVVHRSDEQQHYFNTPFQLSIAPPEAEGAVLSDSPDAADSNSFDVQLGDIILTATDGLFDNMPDYMILQELKKLKNTNYESIQQTARSIAEQAHDLAYDPNYMSPFAQFACDYGLNVRGGKPDDITVLLSIVAEYTD</sequence>
<organism>
    <name type="scientific">Xenopus laevis</name>
    <name type="common">African clawed frog</name>
    <dbReference type="NCBI Taxonomy" id="8355"/>
    <lineage>
        <taxon>Eukaryota</taxon>
        <taxon>Metazoa</taxon>
        <taxon>Chordata</taxon>
        <taxon>Craniata</taxon>
        <taxon>Vertebrata</taxon>
        <taxon>Euteleostomi</taxon>
        <taxon>Amphibia</taxon>
        <taxon>Batrachia</taxon>
        <taxon>Anura</taxon>
        <taxon>Pipoidea</taxon>
        <taxon>Pipidae</taxon>
        <taxon>Xenopodinae</taxon>
        <taxon>Xenopus</taxon>
        <taxon>Xenopus</taxon>
    </lineage>
</organism>
<dbReference type="EC" id="3.1.3.16" evidence="2"/>
<dbReference type="EMBL" id="BC071109">
    <property type="protein sequence ID" value="AAH71109.1"/>
    <property type="molecule type" value="mRNA"/>
</dbReference>
<dbReference type="RefSeq" id="NP_001085343.1">
    <property type="nucleotide sequence ID" value="NM_001091874.1"/>
</dbReference>
<dbReference type="SMR" id="Q6GR25"/>
<dbReference type="DNASU" id="443769"/>
<dbReference type="GeneID" id="443769"/>
<dbReference type="KEGG" id="xla:443769"/>
<dbReference type="AGR" id="Xenbase:XB-GENE-1012927"/>
<dbReference type="CTD" id="443769"/>
<dbReference type="OrthoDB" id="60843at2759"/>
<dbReference type="Proteomes" id="UP000186698">
    <property type="component" value="Chromosome 1L"/>
</dbReference>
<dbReference type="Bgee" id="443769">
    <property type="expression patterns" value="Expressed in heart and 19 other cell types or tissues"/>
</dbReference>
<dbReference type="GO" id="GO:0005759">
    <property type="term" value="C:mitochondrial matrix"/>
    <property type="evidence" value="ECO:0007669"/>
    <property type="project" value="UniProtKB-SubCell"/>
</dbReference>
<dbReference type="GO" id="GO:0005739">
    <property type="term" value="C:mitochondrion"/>
    <property type="evidence" value="ECO:0000318"/>
    <property type="project" value="GO_Central"/>
</dbReference>
<dbReference type="GO" id="GO:0046872">
    <property type="term" value="F:metal ion binding"/>
    <property type="evidence" value="ECO:0007669"/>
    <property type="project" value="UniProtKB-KW"/>
</dbReference>
<dbReference type="GO" id="GO:0004722">
    <property type="term" value="F:protein serine/threonine phosphatase activity"/>
    <property type="evidence" value="ECO:0000318"/>
    <property type="project" value="GO_Central"/>
</dbReference>
<dbReference type="GO" id="GO:0010795">
    <property type="term" value="P:regulation of ubiquinone biosynthetic process"/>
    <property type="evidence" value="ECO:0000318"/>
    <property type="project" value="GO_Central"/>
</dbReference>
<dbReference type="FunFam" id="3.60.40.10:FF:000009">
    <property type="entry name" value="Blast:Protein phosphatase PTC7 homolog"/>
    <property type="match status" value="1"/>
</dbReference>
<dbReference type="Gene3D" id="3.60.40.10">
    <property type="entry name" value="PPM-type phosphatase domain"/>
    <property type="match status" value="1"/>
</dbReference>
<dbReference type="InterPro" id="IPR036457">
    <property type="entry name" value="PPM-type-like_dom_sf"/>
</dbReference>
<dbReference type="InterPro" id="IPR001932">
    <property type="entry name" value="PPM-type_phosphatase-like_dom"/>
</dbReference>
<dbReference type="InterPro" id="IPR039123">
    <property type="entry name" value="PPTC7"/>
</dbReference>
<dbReference type="PANTHER" id="PTHR12320">
    <property type="entry name" value="PROTEIN PHOSPHATASE 2C"/>
    <property type="match status" value="1"/>
</dbReference>
<dbReference type="PANTHER" id="PTHR12320:SF1">
    <property type="entry name" value="PROTEIN PHOSPHATASE PTC7 HOMOLOG"/>
    <property type="match status" value="1"/>
</dbReference>
<dbReference type="Pfam" id="PF07228">
    <property type="entry name" value="SpoIIE"/>
    <property type="match status" value="1"/>
</dbReference>
<dbReference type="SMART" id="SM00331">
    <property type="entry name" value="PP2C_SIG"/>
    <property type="match status" value="1"/>
</dbReference>
<dbReference type="SMART" id="SM00332">
    <property type="entry name" value="PP2Cc"/>
    <property type="match status" value="1"/>
</dbReference>
<dbReference type="SUPFAM" id="SSF81606">
    <property type="entry name" value="PP2C-like"/>
    <property type="match status" value="1"/>
</dbReference>
<dbReference type="PROSITE" id="PS51746">
    <property type="entry name" value="PPM_2"/>
    <property type="match status" value="1"/>
</dbReference>
<gene>
    <name type="primary">pptc7</name>
</gene>
<accession>Q6GR25</accession>
<feature type="transit peptide" description="Mitochondrion" evidence="3">
    <location>
        <begin position="1"/>
        <end position="27"/>
    </location>
</feature>
<feature type="chain" id="PRO_0000328748" description="Protein phosphatase PTC7 homolog">
    <location>
        <begin position="28"/>
        <end position="297"/>
    </location>
</feature>
<feature type="domain" description="PPM-type phosphatase" evidence="4">
    <location>
        <begin position="28"/>
        <end position="292"/>
    </location>
</feature>
<feature type="binding site" evidence="1">
    <location>
        <position position="71"/>
    </location>
    <ligand>
        <name>Mn(2+)</name>
        <dbReference type="ChEBI" id="CHEBI:29035"/>
        <label>1</label>
    </ligand>
</feature>
<feature type="binding site" evidence="1">
    <location>
        <position position="71"/>
    </location>
    <ligand>
        <name>Mn(2+)</name>
        <dbReference type="ChEBI" id="CHEBI:29035"/>
        <label>2</label>
    </ligand>
</feature>
<feature type="binding site" evidence="1">
    <location>
        <position position="72"/>
    </location>
    <ligand>
        <name>Mn(2+)</name>
        <dbReference type="ChEBI" id="CHEBI:29035"/>
        <label>1</label>
    </ligand>
</feature>
<feature type="binding site" evidence="1">
    <location>
        <position position="216"/>
    </location>
    <ligand>
        <name>Mn(2+)</name>
        <dbReference type="ChEBI" id="CHEBI:29035"/>
        <label>2</label>
    </ligand>
</feature>
<reference key="1">
    <citation type="submission" date="2004-05" db="EMBL/GenBank/DDBJ databases">
        <authorList>
            <consortium name="NIH - Xenopus Gene Collection (XGC) project"/>
        </authorList>
    </citation>
    <scope>NUCLEOTIDE SEQUENCE [LARGE SCALE MRNA]</scope>
    <source>
        <tissue>Embryo</tissue>
    </source>
</reference>
<comment type="function">
    <text evidence="2">Protein phosphatase which positively regulates biosynthesis of the ubiquinone, coenzyme Q (By similarity). Dephosphorylates the ubiquinone biosynthesis protein coq7 which is likely to lead to its activation (By similarity).</text>
</comment>
<comment type="catalytic activity">
    <reaction evidence="4">
        <text>O-phospho-L-seryl-[protein] + H2O = L-seryl-[protein] + phosphate</text>
        <dbReference type="Rhea" id="RHEA:20629"/>
        <dbReference type="Rhea" id="RHEA-COMP:9863"/>
        <dbReference type="Rhea" id="RHEA-COMP:11604"/>
        <dbReference type="ChEBI" id="CHEBI:15377"/>
        <dbReference type="ChEBI" id="CHEBI:29999"/>
        <dbReference type="ChEBI" id="CHEBI:43474"/>
        <dbReference type="ChEBI" id="CHEBI:83421"/>
        <dbReference type="EC" id="3.1.3.16"/>
    </reaction>
</comment>
<comment type="catalytic activity">
    <reaction evidence="2">
        <text>O-phospho-L-threonyl-[protein] + H2O = L-threonyl-[protein] + phosphate</text>
        <dbReference type="Rhea" id="RHEA:47004"/>
        <dbReference type="Rhea" id="RHEA-COMP:11060"/>
        <dbReference type="Rhea" id="RHEA-COMP:11605"/>
        <dbReference type="ChEBI" id="CHEBI:15377"/>
        <dbReference type="ChEBI" id="CHEBI:30013"/>
        <dbReference type="ChEBI" id="CHEBI:43474"/>
        <dbReference type="ChEBI" id="CHEBI:61977"/>
        <dbReference type="EC" id="3.1.3.16"/>
    </reaction>
</comment>
<comment type="cofactor">
    <cofactor evidence="2">
        <name>Mg(2+)</name>
        <dbReference type="ChEBI" id="CHEBI:18420"/>
    </cofactor>
    <cofactor evidence="2">
        <name>Mn(2+)</name>
        <dbReference type="ChEBI" id="CHEBI:29035"/>
    </cofactor>
    <text evidence="4">Binds 2 magnesium or manganese ions per subunit.</text>
</comment>
<comment type="subcellular location">
    <subcellularLocation>
        <location evidence="2">Mitochondrion matrix</location>
    </subcellularLocation>
</comment>
<comment type="similarity">
    <text evidence="5">Belongs to the PP2C family.</text>
</comment>
<proteinExistence type="evidence at transcript level"/>
<keyword id="KW-0378">Hydrolase</keyword>
<keyword id="KW-0460">Magnesium</keyword>
<keyword id="KW-0464">Manganese</keyword>
<keyword id="KW-0479">Metal-binding</keyword>
<keyword id="KW-0496">Mitochondrion</keyword>
<keyword id="KW-0904">Protein phosphatase</keyword>
<keyword id="KW-1185">Reference proteome</keyword>
<keyword id="KW-0809">Transit peptide</keyword>
<evidence type="ECO:0000250" key="1">
    <source>
        <dbReference type="UniProtKB" id="P35813"/>
    </source>
</evidence>
<evidence type="ECO:0000250" key="2">
    <source>
        <dbReference type="UniProtKB" id="Q8NI37"/>
    </source>
</evidence>
<evidence type="ECO:0000255" key="3"/>
<evidence type="ECO:0000255" key="4">
    <source>
        <dbReference type="PROSITE-ProRule" id="PRU01082"/>
    </source>
</evidence>
<evidence type="ECO:0000305" key="5"/>